<feature type="chain" id="PRO_0000307526" description="Triosephosphate isomerase">
    <location>
        <begin position="1"/>
        <end position="241"/>
    </location>
</feature>
<feature type="active site" description="Electrophile" evidence="1">
    <location>
        <position position="96"/>
    </location>
</feature>
<feature type="active site" description="Proton acceptor" evidence="1">
    <location>
        <position position="165"/>
    </location>
</feature>
<feature type="binding site" evidence="1">
    <location>
        <begin position="9"/>
        <end position="11"/>
    </location>
    <ligand>
        <name>substrate</name>
    </ligand>
</feature>
<feature type="binding site" evidence="1">
    <location>
        <position position="171"/>
    </location>
    <ligand>
        <name>substrate</name>
    </ligand>
</feature>
<feature type="binding site" evidence="1">
    <location>
        <position position="204"/>
    </location>
    <ligand>
        <name>substrate</name>
    </ligand>
</feature>
<feature type="binding site" evidence="1">
    <location>
        <begin position="225"/>
        <end position="226"/>
    </location>
    <ligand>
        <name>substrate</name>
    </ligand>
</feature>
<protein>
    <recommendedName>
        <fullName evidence="1">Triosephosphate isomerase</fullName>
        <shortName evidence="1">TIM</shortName>
        <shortName evidence="1">TPI</shortName>
        <ecNumber evidence="1">5.3.1.1</ecNumber>
    </recommendedName>
    <alternativeName>
        <fullName evidence="1">Triose-phosphate isomerase</fullName>
    </alternativeName>
</protein>
<evidence type="ECO:0000255" key="1">
    <source>
        <dbReference type="HAMAP-Rule" id="MF_00147"/>
    </source>
</evidence>
<reference key="1">
    <citation type="journal article" date="2006" name="Science">
        <title>Genomic islands and the ecology and evolution of Prochlorococcus.</title>
        <authorList>
            <person name="Coleman M.L."/>
            <person name="Sullivan M.B."/>
            <person name="Martiny A.C."/>
            <person name="Steglich C."/>
            <person name="Barry K."/>
            <person name="Delong E.F."/>
            <person name="Chisholm S.W."/>
        </authorList>
    </citation>
    <scope>NUCLEOTIDE SEQUENCE [LARGE SCALE GENOMIC DNA]</scope>
    <source>
        <strain>MIT 9312</strain>
    </source>
</reference>
<name>TPIS_PROM9</name>
<accession>Q31AR4</accession>
<comment type="function">
    <text evidence="1">Involved in the gluconeogenesis. Catalyzes stereospecifically the conversion of dihydroxyacetone phosphate (DHAP) to D-glyceraldehyde-3-phosphate (G3P).</text>
</comment>
<comment type="catalytic activity">
    <reaction evidence="1">
        <text>D-glyceraldehyde 3-phosphate = dihydroxyacetone phosphate</text>
        <dbReference type="Rhea" id="RHEA:18585"/>
        <dbReference type="ChEBI" id="CHEBI:57642"/>
        <dbReference type="ChEBI" id="CHEBI:59776"/>
        <dbReference type="EC" id="5.3.1.1"/>
    </reaction>
</comment>
<comment type="pathway">
    <text evidence="1">Carbohydrate biosynthesis; gluconeogenesis.</text>
</comment>
<comment type="pathway">
    <text evidence="1">Carbohydrate degradation; glycolysis; D-glyceraldehyde 3-phosphate from glycerone phosphate: step 1/1.</text>
</comment>
<comment type="subunit">
    <text evidence="1">Homodimer.</text>
</comment>
<comment type="subcellular location">
    <subcellularLocation>
        <location evidence="1">Cytoplasm</location>
    </subcellularLocation>
</comment>
<comment type="similarity">
    <text evidence="1">Belongs to the triosephosphate isomerase family.</text>
</comment>
<organism>
    <name type="scientific">Prochlorococcus marinus (strain MIT 9312)</name>
    <dbReference type="NCBI Taxonomy" id="74546"/>
    <lineage>
        <taxon>Bacteria</taxon>
        <taxon>Bacillati</taxon>
        <taxon>Cyanobacteriota</taxon>
        <taxon>Cyanophyceae</taxon>
        <taxon>Synechococcales</taxon>
        <taxon>Prochlorococcaceae</taxon>
        <taxon>Prochlorococcus</taxon>
    </lineage>
</organism>
<gene>
    <name evidence="1" type="primary">tpiA</name>
    <name type="ordered locus">PMT9312_0971</name>
</gene>
<sequence>MRKSVIAGNWKMHMTCAEAKSYLEEFIPLIKNIRDDRKVVIAPPFTAISTFSKHSDFDYLDISSQNIHWEDEGAFTAEISPKMLIEHGVSYAIVGHSEPRKYFSESDEQINKRAVFAQCSGLTPIVCVGETLEQRERGEADRVITRQVEQGLENTDPSNLIVAYEPIWAIGTGKTCEAKDANNICSLIRKLIGFDDVIIQYGGSVKPNNIDEIMSMSDIDGVLVGGASLDPNSFARIANYQ</sequence>
<proteinExistence type="inferred from homology"/>
<keyword id="KW-0963">Cytoplasm</keyword>
<keyword id="KW-0312">Gluconeogenesis</keyword>
<keyword id="KW-0324">Glycolysis</keyword>
<keyword id="KW-0413">Isomerase</keyword>
<dbReference type="EC" id="5.3.1.1" evidence="1"/>
<dbReference type="EMBL" id="CP000111">
    <property type="protein sequence ID" value="ABB50031.1"/>
    <property type="molecule type" value="Genomic_DNA"/>
</dbReference>
<dbReference type="RefSeq" id="WP_011376523.1">
    <property type="nucleotide sequence ID" value="NC_007577.1"/>
</dbReference>
<dbReference type="SMR" id="Q31AR4"/>
<dbReference type="STRING" id="74546.PMT9312_0971"/>
<dbReference type="KEGG" id="pmi:PMT9312_0971"/>
<dbReference type="eggNOG" id="COG0149">
    <property type="taxonomic scope" value="Bacteria"/>
</dbReference>
<dbReference type="HOGENOM" id="CLU_024251_2_3_3"/>
<dbReference type="OrthoDB" id="9809429at2"/>
<dbReference type="UniPathway" id="UPA00109">
    <property type="reaction ID" value="UER00189"/>
</dbReference>
<dbReference type="UniPathway" id="UPA00138"/>
<dbReference type="Proteomes" id="UP000002715">
    <property type="component" value="Chromosome"/>
</dbReference>
<dbReference type="GO" id="GO:0005829">
    <property type="term" value="C:cytosol"/>
    <property type="evidence" value="ECO:0007669"/>
    <property type="project" value="TreeGrafter"/>
</dbReference>
<dbReference type="GO" id="GO:0004807">
    <property type="term" value="F:triose-phosphate isomerase activity"/>
    <property type="evidence" value="ECO:0007669"/>
    <property type="project" value="UniProtKB-UniRule"/>
</dbReference>
<dbReference type="GO" id="GO:0006094">
    <property type="term" value="P:gluconeogenesis"/>
    <property type="evidence" value="ECO:0007669"/>
    <property type="project" value="UniProtKB-UniRule"/>
</dbReference>
<dbReference type="GO" id="GO:0046166">
    <property type="term" value="P:glyceraldehyde-3-phosphate biosynthetic process"/>
    <property type="evidence" value="ECO:0007669"/>
    <property type="project" value="TreeGrafter"/>
</dbReference>
<dbReference type="GO" id="GO:0019563">
    <property type="term" value="P:glycerol catabolic process"/>
    <property type="evidence" value="ECO:0007669"/>
    <property type="project" value="TreeGrafter"/>
</dbReference>
<dbReference type="GO" id="GO:0006096">
    <property type="term" value="P:glycolytic process"/>
    <property type="evidence" value="ECO:0007669"/>
    <property type="project" value="UniProtKB-UniRule"/>
</dbReference>
<dbReference type="CDD" id="cd00311">
    <property type="entry name" value="TIM"/>
    <property type="match status" value="1"/>
</dbReference>
<dbReference type="FunFam" id="3.20.20.70:FF:000016">
    <property type="entry name" value="Triosephosphate isomerase"/>
    <property type="match status" value="1"/>
</dbReference>
<dbReference type="Gene3D" id="3.20.20.70">
    <property type="entry name" value="Aldolase class I"/>
    <property type="match status" value="1"/>
</dbReference>
<dbReference type="HAMAP" id="MF_00147_B">
    <property type="entry name" value="TIM_B"/>
    <property type="match status" value="1"/>
</dbReference>
<dbReference type="InterPro" id="IPR013785">
    <property type="entry name" value="Aldolase_TIM"/>
</dbReference>
<dbReference type="InterPro" id="IPR035990">
    <property type="entry name" value="TIM_sf"/>
</dbReference>
<dbReference type="InterPro" id="IPR022896">
    <property type="entry name" value="TrioseP_Isoase_bac/euk"/>
</dbReference>
<dbReference type="InterPro" id="IPR000652">
    <property type="entry name" value="Triosephosphate_isomerase"/>
</dbReference>
<dbReference type="InterPro" id="IPR020861">
    <property type="entry name" value="Triosephosphate_isomerase_AS"/>
</dbReference>
<dbReference type="NCBIfam" id="TIGR00419">
    <property type="entry name" value="tim"/>
    <property type="match status" value="1"/>
</dbReference>
<dbReference type="PANTHER" id="PTHR21139">
    <property type="entry name" value="TRIOSEPHOSPHATE ISOMERASE"/>
    <property type="match status" value="1"/>
</dbReference>
<dbReference type="PANTHER" id="PTHR21139:SF42">
    <property type="entry name" value="TRIOSEPHOSPHATE ISOMERASE"/>
    <property type="match status" value="1"/>
</dbReference>
<dbReference type="Pfam" id="PF00121">
    <property type="entry name" value="TIM"/>
    <property type="match status" value="1"/>
</dbReference>
<dbReference type="SUPFAM" id="SSF51351">
    <property type="entry name" value="Triosephosphate isomerase (TIM)"/>
    <property type="match status" value="1"/>
</dbReference>
<dbReference type="PROSITE" id="PS00171">
    <property type="entry name" value="TIM_1"/>
    <property type="match status" value="1"/>
</dbReference>
<dbReference type="PROSITE" id="PS51440">
    <property type="entry name" value="TIM_2"/>
    <property type="match status" value="1"/>
</dbReference>